<feature type="chain" id="PRO_0000352380" description="Inosose dehydratase">
    <location>
        <begin position="1"/>
        <end position="298"/>
    </location>
</feature>
<proteinExistence type="inferred from homology"/>
<comment type="function">
    <text evidence="1">Catalyzes the dehydration of inosose (2-keto-myo-inositol, 2KMI or 2,4,6/3,5-pentahydroxycyclohexanone) to 3D-(3,5/4)-trihydroxycyclohexane-1,2-dione (D-2,3-diketo-4-deoxy-epi-inositol).</text>
</comment>
<comment type="catalytic activity">
    <reaction evidence="1">
        <text>scyllo-inosose = 3D-3,5/4-trihydroxycyclohexane-1,2-dione + H2O</text>
        <dbReference type="Rhea" id="RHEA:14065"/>
        <dbReference type="ChEBI" id="CHEBI:15377"/>
        <dbReference type="ChEBI" id="CHEBI:17811"/>
        <dbReference type="ChEBI" id="CHEBI:28446"/>
        <dbReference type="EC" id="4.2.1.44"/>
    </reaction>
</comment>
<comment type="cofactor">
    <cofactor evidence="1">
        <name>glutathione</name>
        <dbReference type="ChEBI" id="CHEBI:57925"/>
    </cofactor>
</comment>
<comment type="cofactor">
    <cofactor evidence="1">
        <name>Co(2+)</name>
        <dbReference type="ChEBI" id="CHEBI:48828"/>
    </cofactor>
    <cofactor evidence="1">
        <name>Mn(2+)</name>
        <dbReference type="ChEBI" id="CHEBI:29035"/>
    </cofactor>
</comment>
<comment type="similarity">
    <text evidence="1">Belongs to the IolE/MocC family.</text>
</comment>
<reference key="1">
    <citation type="submission" date="2007-09" db="EMBL/GenBank/DDBJ databases">
        <title>Complete sequence of chromosome of Serratia proteamaculans 568.</title>
        <authorList>
            <consortium name="US DOE Joint Genome Institute"/>
            <person name="Copeland A."/>
            <person name="Lucas S."/>
            <person name="Lapidus A."/>
            <person name="Barry K."/>
            <person name="Glavina del Rio T."/>
            <person name="Dalin E."/>
            <person name="Tice H."/>
            <person name="Pitluck S."/>
            <person name="Chain P."/>
            <person name="Malfatti S."/>
            <person name="Shin M."/>
            <person name="Vergez L."/>
            <person name="Schmutz J."/>
            <person name="Larimer F."/>
            <person name="Land M."/>
            <person name="Hauser L."/>
            <person name="Kyrpides N."/>
            <person name="Kim E."/>
            <person name="Taghavi S."/>
            <person name="Newman L."/>
            <person name="Vangronsveld J."/>
            <person name="van der Lelie D."/>
            <person name="Richardson P."/>
        </authorList>
    </citation>
    <scope>NUCLEOTIDE SEQUENCE [LARGE SCALE GENOMIC DNA]</scope>
    <source>
        <strain>568</strain>
    </source>
</reference>
<evidence type="ECO:0000255" key="1">
    <source>
        <dbReference type="HAMAP-Rule" id="MF_01672"/>
    </source>
</evidence>
<accession>A8GKV9</accession>
<dbReference type="EC" id="4.2.1.44" evidence="1"/>
<dbReference type="EMBL" id="CP000826">
    <property type="protein sequence ID" value="ABV43749.1"/>
    <property type="molecule type" value="Genomic_DNA"/>
</dbReference>
<dbReference type="SMR" id="A8GKV9"/>
<dbReference type="STRING" id="399741.Spro_4656"/>
<dbReference type="KEGG" id="spe:Spro_4656"/>
<dbReference type="eggNOG" id="COG1082">
    <property type="taxonomic scope" value="Bacteria"/>
</dbReference>
<dbReference type="HOGENOM" id="CLU_059523_0_0_6"/>
<dbReference type="OrthoDB" id="9804047at2"/>
<dbReference type="GO" id="GO:0030145">
    <property type="term" value="F:manganese ion binding"/>
    <property type="evidence" value="ECO:0007669"/>
    <property type="project" value="UniProtKB-UniRule"/>
</dbReference>
<dbReference type="GO" id="GO:0050114">
    <property type="term" value="F:myo-inosose-2 dehydratase activity"/>
    <property type="evidence" value="ECO:0007669"/>
    <property type="project" value="UniProtKB-UniRule"/>
</dbReference>
<dbReference type="GO" id="GO:0019310">
    <property type="term" value="P:inositol catabolic process"/>
    <property type="evidence" value="ECO:0007669"/>
    <property type="project" value="UniProtKB-UniRule"/>
</dbReference>
<dbReference type="Gene3D" id="3.20.20.150">
    <property type="entry name" value="Divalent-metal-dependent TIM barrel enzymes"/>
    <property type="match status" value="1"/>
</dbReference>
<dbReference type="HAMAP" id="MF_01672">
    <property type="entry name" value="IolE"/>
    <property type="match status" value="1"/>
</dbReference>
<dbReference type="InterPro" id="IPR023952">
    <property type="entry name" value="IolE"/>
</dbReference>
<dbReference type="InterPro" id="IPR030823">
    <property type="entry name" value="IolE/MocC"/>
</dbReference>
<dbReference type="InterPro" id="IPR050312">
    <property type="entry name" value="IolE/XylAMocC-like"/>
</dbReference>
<dbReference type="InterPro" id="IPR036237">
    <property type="entry name" value="Xyl_isomerase-like_sf"/>
</dbReference>
<dbReference type="InterPro" id="IPR013022">
    <property type="entry name" value="Xyl_isomerase-like_TIM-brl"/>
</dbReference>
<dbReference type="NCBIfam" id="TIGR04379">
    <property type="entry name" value="myo_inos_iolE"/>
    <property type="match status" value="1"/>
</dbReference>
<dbReference type="PANTHER" id="PTHR12110">
    <property type="entry name" value="HYDROXYPYRUVATE ISOMERASE"/>
    <property type="match status" value="1"/>
</dbReference>
<dbReference type="PANTHER" id="PTHR12110:SF41">
    <property type="entry name" value="INOSOSE DEHYDRATASE"/>
    <property type="match status" value="1"/>
</dbReference>
<dbReference type="Pfam" id="PF01261">
    <property type="entry name" value="AP_endonuc_2"/>
    <property type="match status" value="1"/>
</dbReference>
<dbReference type="SUPFAM" id="SSF51658">
    <property type="entry name" value="Xylose isomerase-like"/>
    <property type="match status" value="1"/>
</dbReference>
<protein>
    <recommendedName>
        <fullName evidence="1">Inosose dehydratase</fullName>
        <ecNumber evidence="1">4.2.1.44</ecNumber>
    </recommendedName>
    <alternativeName>
        <fullName evidence="1">2-keto-myo-inositol dehydratase</fullName>
        <shortName evidence="1">2KMI dehydratase</shortName>
    </alternativeName>
</protein>
<keyword id="KW-0170">Cobalt</keyword>
<keyword id="KW-0456">Lyase</keyword>
<keyword id="KW-0464">Manganese</keyword>
<organism>
    <name type="scientific">Serratia proteamaculans (strain 568)</name>
    <dbReference type="NCBI Taxonomy" id="399741"/>
    <lineage>
        <taxon>Bacteria</taxon>
        <taxon>Pseudomonadati</taxon>
        <taxon>Pseudomonadota</taxon>
        <taxon>Gammaproteobacteria</taxon>
        <taxon>Enterobacterales</taxon>
        <taxon>Yersiniaceae</taxon>
        <taxon>Serratia</taxon>
    </lineage>
</organism>
<name>IOLE_SERP5</name>
<gene>
    <name evidence="1" type="primary">iolE</name>
    <name type="ordered locus">Spro_4656</name>
</gene>
<sequence>MNKDNVKLAIAPIGWTNDDMPDLGKENTFQQCVSEMALAGFTGSEVGSKYPRDPAVLKPMLDIRGIQICNAWFSTFFADGLKEKTIDEFINHMNFLHAMGAKVIGCSEQSKSIQGTTKGVFEEKPYFSDEEWQRVADGYNELADIAKGKGMQVCLHHHMGTGIQTTAEIDRYMSMVNDDVYLLFDTGHAYYSEGSQQAMMAILEKYLPRINHVHLKDVRDEVVAEVKANKLSFLDGVKKGTFTVPGDGVIDFRPVFKLLDERGYKGWMVVEAEQDPALANPFEYAVKARRYIKETAGI</sequence>